<proteinExistence type="evidence at protein level"/>
<keyword id="KW-0002">3D-structure</keyword>
<keyword id="KW-0150">Chloroplast</keyword>
<keyword id="KW-0342">GTP-binding</keyword>
<keyword id="KW-0378">Hydrolase</keyword>
<keyword id="KW-0460">Magnesium</keyword>
<keyword id="KW-0472">Membrane</keyword>
<keyword id="KW-0479">Metal-binding</keyword>
<keyword id="KW-0547">Nucleotide-binding</keyword>
<keyword id="KW-0934">Plastid</keyword>
<keyword id="KW-1002">Plastid outer membrane</keyword>
<keyword id="KW-0653">Protein transport</keyword>
<keyword id="KW-0675">Receptor</keyword>
<keyword id="KW-0812">Transmembrane</keyword>
<keyword id="KW-1133">Transmembrane helix</keyword>
<keyword id="KW-0813">Transport</keyword>
<dbReference type="EC" id="3.6.5.-" evidence="10"/>
<dbReference type="EMBL" id="GU814014">
    <property type="protein sequence ID" value="ADF43133.1"/>
    <property type="molecule type" value="Genomic_DNA"/>
</dbReference>
<dbReference type="EMBL" id="DS496110">
    <property type="protein sequence ID" value="EDP08621.1"/>
    <property type="molecule type" value="Genomic_DNA"/>
</dbReference>
<dbReference type="RefSeq" id="XP_001696644.1">
    <property type="nucleotide sequence ID" value="XM_001696592.1"/>
</dbReference>
<dbReference type="PDB" id="7VCF">
    <property type="method" value="EM"/>
    <property type="resolution" value="2.50 A"/>
    <property type="chains" value="G=1-397"/>
</dbReference>
<dbReference type="PDB" id="7XZI">
    <property type="method" value="EM"/>
    <property type="resolution" value="2.77 A"/>
    <property type="chains" value="G=1-397"/>
</dbReference>
<dbReference type="PDB" id="7XZJ">
    <property type="method" value="EM"/>
    <property type="resolution" value="2.97 A"/>
    <property type="chains" value="G=1-397"/>
</dbReference>
<dbReference type="PDBsum" id="7VCF"/>
<dbReference type="PDBsum" id="7XZI"/>
<dbReference type="PDBsum" id="7XZJ"/>
<dbReference type="EMDB" id="EMD-31890"/>
<dbReference type="EMDB" id="EMD-33528"/>
<dbReference type="EMDB" id="EMD-33529"/>
<dbReference type="SMR" id="A8HYJ1"/>
<dbReference type="PaxDb" id="3055-EDP08621"/>
<dbReference type="EnsemblPlants" id="PNW81571">
    <property type="protein sequence ID" value="PNW81571"/>
    <property type="gene ID" value="CHLRE_06g252200v5"/>
</dbReference>
<dbReference type="GeneID" id="5722177"/>
<dbReference type="Gramene" id="PNW81571">
    <property type="protein sequence ID" value="PNW81571"/>
    <property type="gene ID" value="CHLRE_06g252200v5"/>
</dbReference>
<dbReference type="KEGG" id="cre:CHLRE_06g252200v5"/>
<dbReference type="eggNOG" id="ENOG502QSV2">
    <property type="taxonomic scope" value="Eukaryota"/>
</dbReference>
<dbReference type="HOGENOM" id="CLU_695140_0_0_1"/>
<dbReference type="OMA" id="AWRLEQM"/>
<dbReference type="OrthoDB" id="8954335at2759"/>
<dbReference type="GO" id="GO:0009707">
    <property type="term" value="C:chloroplast outer membrane"/>
    <property type="evidence" value="ECO:0007669"/>
    <property type="project" value="UniProtKB-SubCell"/>
</dbReference>
<dbReference type="GO" id="GO:0005525">
    <property type="term" value="F:GTP binding"/>
    <property type="evidence" value="ECO:0007669"/>
    <property type="project" value="UniProtKB-KW"/>
</dbReference>
<dbReference type="GO" id="GO:0016787">
    <property type="term" value="F:hydrolase activity"/>
    <property type="evidence" value="ECO:0007669"/>
    <property type="project" value="UniProtKB-KW"/>
</dbReference>
<dbReference type="GO" id="GO:0046872">
    <property type="term" value="F:metal ion binding"/>
    <property type="evidence" value="ECO:0007669"/>
    <property type="project" value="UniProtKB-KW"/>
</dbReference>
<dbReference type="GO" id="GO:0015031">
    <property type="term" value="P:protein transport"/>
    <property type="evidence" value="ECO:0007669"/>
    <property type="project" value="UniProtKB-KW"/>
</dbReference>
<dbReference type="Gene3D" id="3.40.50.300">
    <property type="entry name" value="P-loop containing nucleotide triphosphate hydrolases"/>
    <property type="match status" value="1"/>
</dbReference>
<dbReference type="InterPro" id="IPR006703">
    <property type="entry name" value="G_AIG1"/>
</dbReference>
<dbReference type="InterPro" id="IPR045058">
    <property type="entry name" value="GIMA/IAN/Toc"/>
</dbReference>
<dbReference type="InterPro" id="IPR027417">
    <property type="entry name" value="P-loop_NTPase"/>
</dbReference>
<dbReference type="PANTHER" id="PTHR10903">
    <property type="entry name" value="GTPASE, IMAP FAMILY MEMBER-RELATED"/>
    <property type="match status" value="1"/>
</dbReference>
<dbReference type="PANTHER" id="PTHR10903:SF135">
    <property type="entry name" value="TRANSLOCASE OF CHLOROPLAST 120, CHLOROPLASTIC-RELATED"/>
    <property type="match status" value="1"/>
</dbReference>
<dbReference type="Pfam" id="PF04548">
    <property type="entry name" value="AIG1"/>
    <property type="match status" value="1"/>
</dbReference>
<dbReference type="SUPFAM" id="SSF52540">
    <property type="entry name" value="P-loop containing nucleoside triphosphate hydrolases"/>
    <property type="match status" value="1"/>
</dbReference>
<dbReference type="PROSITE" id="PS51720">
    <property type="entry name" value="G_AIG1"/>
    <property type="match status" value="1"/>
</dbReference>
<sequence length="397" mass="44542">MAQPPRPAEEYDDDVQEDEDELKEGELDDDESHEAASEGGEAAAGDEEAEDDEQDEEDGDEDSQPWAGLNRLPERDDMLDILNELRAEGRKQLTVLLLGKSSVGKSSLINSLLGEAVVRVQAFKLQADTDITTTVVRQVAVGNSEVDGFRLKLIDTCGLEDPEAGDTVNLGALSKIAEDVRGVGIDVVLYCDRLDLYRVDPLDKAIIDAISSTFGRGIWRRTVVALTHANLVQTPPGTDYDSFVNGRVRLIRGAVRGPLFFRPSLPVALVENSETCPVSSESGFRVLPDGEPWLVALVSQLVDMAAARRRPYKYHPRLSSKPSHRFRWLLPVAIAAEVLFYRRFLHPRLDDNQRRVEREEERVWALRGQQRRALGLHRPHRPDKDAAWRLEQMYDDD</sequence>
<protein>
    <recommendedName>
        <fullName evidence="10">Translocase of chloroplast 34 homolog, chloroplastic</fullName>
        <shortName evidence="9">Cr-TOC34</shortName>
        <shortName evidence="8">TOC34p</shortName>
        <ecNumber evidence="10">3.6.5.-</ecNumber>
    </recommendedName>
</protein>
<accession>A8HYJ1</accession>
<organism>
    <name type="scientific">Chlamydomonas reinhardtii</name>
    <name type="common">Chlamydomonas smithii</name>
    <dbReference type="NCBI Taxonomy" id="3055"/>
    <lineage>
        <taxon>Eukaryota</taxon>
        <taxon>Viridiplantae</taxon>
        <taxon>Chlorophyta</taxon>
        <taxon>core chlorophytes</taxon>
        <taxon>Chlorophyceae</taxon>
        <taxon>CS clade</taxon>
        <taxon>Chlamydomonadales</taxon>
        <taxon>Chlamydomonadaceae</taxon>
        <taxon>Chlamydomonas</taxon>
    </lineage>
</organism>
<comment type="function">
    <text evidence="2 6">GTPase involved in protein precursor import into chloroplasts. Seems to recognize chloroplast-destined precursor proteins and regulate their presentation to the translocation channel through GTP hydrolysis (By similarity). Functions as an essential component of the outer chloroplast membrane translocon (TOC) complex, which, in turn, catalyzes the import of nucleus-encoded precursor polypeptides from the cytoplasm to the chloroplast (PubMed:23167510).</text>
</comment>
<comment type="cofactor">
    <cofactor evidence="1">
        <name>Mg(2+)</name>
        <dbReference type="ChEBI" id="CHEBI:18420"/>
    </cofactor>
    <text evidence="1">Binds 1 Mg(2+) ion by subunit.</text>
</comment>
<comment type="subunit">
    <text evidence="2 7">Homodimer, heterodimer with other TOC proteins, and monomer. Part of the TOC core complex that includes 1 protein for the specific recognition of transit peptides surrounded by a ring composed of four proteins forming translocation channels, and four to five GTP-binding proteins providing energy. This core complex can interact with components of the TIC complex to form a larger import complex (By similarity). Interacts with ARSA1 (PubMed:28382961).</text>
</comment>
<comment type="subcellular location">
    <subcellularLocation>
        <location evidence="2">Plastid</location>
        <location evidence="2">Chloroplast outer membrane</location>
        <topology evidence="3">Single-pass membrane protein</topology>
    </subcellularLocation>
</comment>
<comment type="similarity">
    <text evidence="10">Belongs to the TRAFAC class TrmE-Era-EngA-EngB-Septin-like GTPase superfamily. AIG1/Toc34/Toc159-like paraseptin GTPase family. TOC34 subfamily.</text>
</comment>
<feature type="chain" id="PRO_0000442532" description="Translocase of chloroplast 34 homolog, chloroplastic">
    <location>
        <begin position="1"/>
        <end position="397"/>
    </location>
</feature>
<feature type="transmembrane region" description="Helical" evidence="3">
    <location>
        <begin position="329"/>
        <end position="349"/>
    </location>
</feature>
<feature type="domain" description="AIG1-type G" evidence="4">
    <location>
        <begin position="90"/>
        <end position="321"/>
    </location>
</feature>
<feature type="region of interest" description="Disordered" evidence="5">
    <location>
        <begin position="1"/>
        <end position="72"/>
    </location>
</feature>
<feature type="region of interest" description="G1" evidence="4">
    <location>
        <begin position="99"/>
        <end position="106"/>
    </location>
</feature>
<feature type="region of interest" description="Homodimerization" evidence="1">
    <location>
        <begin position="121"/>
        <end position="124"/>
    </location>
</feature>
<feature type="region of interest" description="G2" evidence="4">
    <location>
        <begin position="126"/>
        <end position="130"/>
    </location>
</feature>
<feature type="region of interest" description="G3" evidence="4">
    <location>
        <begin position="155"/>
        <end position="158"/>
    </location>
</feature>
<feature type="region of interest" description="Homodimerization" evidence="1">
    <location>
        <begin position="193"/>
        <end position="198"/>
    </location>
</feature>
<feature type="region of interest" description="G4" evidence="4">
    <location>
        <begin position="227"/>
        <end position="230"/>
    </location>
</feature>
<feature type="region of interest" description="G5" evidence="4">
    <location>
        <begin position="271"/>
        <end position="273"/>
    </location>
</feature>
<feature type="short sequence motif" description="AKR2A-binding sequence (ABS) required for chloroplast outer envelope membrane targeting" evidence="2">
    <location>
        <begin position="350"/>
        <end position="358"/>
    </location>
</feature>
<feature type="compositionally biased region" description="Acidic residues" evidence="5">
    <location>
        <begin position="10"/>
        <end position="32"/>
    </location>
</feature>
<feature type="compositionally biased region" description="Acidic residues" evidence="5">
    <location>
        <begin position="44"/>
        <end position="63"/>
    </location>
</feature>
<feature type="binding site" evidence="1">
    <location>
        <begin position="102"/>
        <end position="107"/>
    </location>
    <ligand>
        <name>GTP</name>
        <dbReference type="ChEBI" id="CHEBI:37565"/>
    </ligand>
</feature>
<feature type="binding site" evidence="1">
    <location>
        <position position="106"/>
    </location>
    <ligand>
        <name>Mg(2+)</name>
        <dbReference type="ChEBI" id="CHEBI:18420"/>
    </ligand>
</feature>
<feature type="binding site" evidence="1">
    <location>
        <begin position="121"/>
        <end position="126"/>
    </location>
    <ligand>
        <name>GTP</name>
        <dbReference type="ChEBI" id="CHEBI:37565"/>
    </ligand>
</feature>
<feature type="binding site" evidence="1">
    <location>
        <position position="228"/>
    </location>
    <ligand>
        <name>GTP</name>
        <dbReference type="ChEBI" id="CHEBI:37565"/>
    </ligand>
</feature>
<feature type="binding site" evidence="1">
    <location>
        <begin position="271"/>
        <end position="272"/>
    </location>
    <ligand>
        <name>GTP</name>
        <dbReference type="ChEBI" id="CHEBI:37565"/>
    </ligand>
</feature>
<feature type="helix" evidence="13">
    <location>
        <begin position="327"/>
        <end position="329"/>
    </location>
</feature>
<feature type="helix" evidence="12">
    <location>
        <begin position="330"/>
        <end position="373"/>
    </location>
</feature>
<feature type="helix" evidence="12">
    <location>
        <begin position="384"/>
        <end position="393"/>
    </location>
</feature>
<gene>
    <name evidence="9" type="primary">TOC34</name>
    <name evidence="11" type="ORF">CHLREDRAFT_187290</name>
</gene>
<reference key="1">
    <citation type="journal article" date="2010" name="Science">
        <title>Evolution of an expanded sex-determining locus in Volvox.</title>
        <authorList>
            <person name="Ferris P."/>
            <person name="Olson B.J."/>
            <person name="De Hoff P.L."/>
            <person name="Douglass S."/>
            <person name="Casero D."/>
            <person name="Prochnik S."/>
            <person name="Geng S."/>
            <person name="Rai R."/>
            <person name="Grimwood J."/>
            <person name="Schmutz J."/>
            <person name="Nishii I."/>
            <person name="Hamaji T."/>
            <person name="Nozaki H."/>
            <person name="Pellegrini M."/>
            <person name="Umen J.G."/>
        </authorList>
    </citation>
    <scope>NUCLEOTIDE SEQUENCE [GENOMIC DNA]</scope>
    <source>
        <strain>CC-503</strain>
    </source>
</reference>
<reference key="2">
    <citation type="journal article" date="2007" name="Science">
        <title>The Chlamydomonas genome reveals the evolution of key animal and plant functions.</title>
        <authorList>
            <person name="Merchant S.S."/>
            <person name="Prochnik S.E."/>
            <person name="Vallon O."/>
            <person name="Harris E.H."/>
            <person name="Karpowicz S.J."/>
            <person name="Witman G.B."/>
            <person name="Terry A."/>
            <person name="Salamov A."/>
            <person name="Fritz-Laylin L.K."/>
            <person name="Marechal-Drouard L."/>
            <person name="Marshall W.F."/>
            <person name="Qu L.H."/>
            <person name="Nelson D.R."/>
            <person name="Sanderfoot A.A."/>
            <person name="Spalding M.H."/>
            <person name="Kapitonov V.V."/>
            <person name="Ren Q."/>
            <person name="Ferris P."/>
            <person name="Lindquist E."/>
            <person name="Shapiro H."/>
            <person name="Lucas S.M."/>
            <person name="Grimwood J."/>
            <person name="Schmutz J."/>
            <person name="Cardol P."/>
            <person name="Cerutti H."/>
            <person name="Chanfreau G."/>
            <person name="Chen C.L."/>
            <person name="Cognat V."/>
            <person name="Croft M.T."/>
            <person name="Dent R."/>
            <person name="Dutcher S."/>
            <person name="Fernandez E."/>
            <person name="Fukuzawa H."/>
            <person name="Gonzalez-Ballester D."/>
            <person name="Gonzalez-Halphen D."/>
            <person name="Hallmann A."/>
            <person name="Hanikenne M."/>
            <person name="Hippler M."/>
            <person name="Inwood W."/>
            <person name="Jabbari K."/>
            <person name="Kalanon M."/>
            <person name="Kuras R."/>
            <person name="Lefebvre P.A."/>
            <person name="Lemaire S.D."/>
            <person name="Lobanov A.V."/>
            <person name="Lohr M."/>
            <person name="Manuell A."/>
            <person name="Meier I."/>
            <person name="Mets L."/>
            <person name="Mittag M."/>
            <person name="Mittelmeier T."/>
            <person name="Moroney J.V."/>
            <person name="Moseley J."/>
            <person name="Napoli C."/>
            <person name="Nedelcu A.M."/>
            <person name="Niyogi K."/>
            <person name="Novoselov S.V."/>
            <person name="Paulsen I.T."/>
            <person name="Pazour G.J."/>
            <person name="Purton S."/>
            <person name="Ral J.P."/>
            <person name="Riano-Pachon D.M."/>
            <person name="Riekhof W."/>
            <person name="Rymarquis L."/>
            <person name="Schroda M."/>
            <person name="Stern D."/>
            <person name="Umen J."/>
            <person name="Willows R."/>
            <person name="Wilson N."/>
            <person name="Zimmer S.L."/>
            <person name="Allmer J."/>
            <person name="Balk J."/>
            <person name="Bisova K."/>
            <person name="Chen C.J."/>
            <person name="Elias M."/>
            <person name="Gendler K."/>
            <person name="Hauser C."/>
            <person name="Lamb M.R."/>
            <person name="Ledford H."/>
            <person name="Long J.C."/>
            <person name="Minagawa J."/>
            <person name="Page M.D."/>
            <person name="Pan J."/>
            <person name="Pootakham W."/>
            <person name="Roje S."/>
            <person name="Rose A."/>
            <person name="Stahlberg E."/>
            <person name="Terauchi A.M."/>
            <person name="Yang P."/>
            <person name="Ball S."/>
            <person name="Bowler C."/>
            <person name="Dieckmann C.L."/>
            <person name="Gladyshev V.N."/>
            <person name="Green P."/>
            <person name="Jorgensen R."/>
            <person name="Mayfield S."/>
            <person name="Mueller-Roeber B."/>
            <person name="Rajamani S."/>
            <person name="Sayre R.T."/>
            <person name="Brokstein P."/>
            <person name="Dubchak I."/>
            <person name="Goodstein D."/>
            <person name="Hornick L."/>
            <person name="Huang Y.W."/>
            <person name="Jhaveri J."/>
            <person name="Luo Y."/>
            <person name="Martinez D."/>
            <person name="Ngau W.C."/>
            <person name="Otillar B."/>
            <person name="Poliakov A."/>
            <person name="Porter A."/>
            <person name="Szajkowski L."/>
            <person name="Werner G."/>
            <person name="Zhou K."/>
            <person name="Grigoriev I.V."/>
            <person name="Rokhsar D.S."/>
            <person name="Grossman A.R."/>
        </authorList>
    </citation>
    <scope>NUCLEOTIDE SEQUENCE [LARGE SCALE GENOMIC DNA]</scope>
    <source>
        <strain>CC-503</strain>
    </source>
</reference>
<reference key="3">
    <citation type="journal article" date="2013" name="Plant J.">
        <title>Biogenesis of photosynthetic complexes in the chloroplast of Chlamydomonas reinhardtii requires ARSA1, a homolog of prokaryotic arsenite transporter and eukaryotic TRC40 for guided entry of tail-anchored proteins.</title>
        <authorList>
            <person name="Formighieri C."/>
            <person name="Cazzaniga S."/>
            <person name="Kuras R."/>
            <person name="Bassi R."/>
        </authorList>
    </citation>
    <scope>FUNCTION</scope>
    <scope>INTERACTION WITH ARSA1</scope>
</reference>
<reference key="4">
    <citation type="journal article" date="2017" name="Sci. Rep.">
        <title>In search of tail-anchored protein machinery in plants: reevaluating the role of arsenite transporters.</title>
        <authorList>
            <person name="Maestre-Reyna M."/>
            <person name="Wu S.M."/>
            <person name="Chang Y.C."/>
            <person name="Chen C.C."/>
            <person name="Maestre-Reyna A."/>
            <person name="Wang A.H."/>
            <person name="Chang H.Y."/>
        </authorList>
    </citation>
    <scope>INTERACTION WITH ARSA1</scope>
</reference>
<name>TOC34_CHLRE</name>
<evidence type="ECO:0000250" key="1"/>
<evidence type="ECO:0000250" key="2">
    <source>
        <dbReference type="UniProtKB" id="Q38906"/>
    </source>
</evidence>
<evidence type="ECO:0000255" key="3"/>
<evidence type="ECO:0000255" key="4">
    <source>
        <dbReference type="PROSITE-ProRule" id="PRU01057"/>
    </source>
</evidence>
<evidence type="ECO:0000256" key="5">
    <source>
        <dbReference type="SAM" id="MobiDB-lite"/>
    </source>
</evidence>
<evidence type="ECO:0000269" key="6">
    <source>
    </source>
</evidence>
<evidence type="ECO:0000269" key="7">
    <source>
    </source>
</evidence>
<evidence type="ECO:0000303" key="8">
    <source>
    </source>
</evidence>
<evidence type="ECO:0000303" key="9">
    <source>
    </source>
</evidence>
<evidence type="ECO:0000305" key="10"/>
<evidence type="ECO:0000312" key="11">
    <source>
        <dbReference type="EMBL" id="EDP08621.1"/>
    </source>
</evidence>
<evidence type="ECO:0007829" key="12">
    <source>
        <dbReference type="PDB" id="7VCF"/>
    </source>
</evidence>
<evidence type="ECO:0007829" key="13">
    <source>
        <dbReference type="PDB" id="7XZI"/>
    </source>
</evidence>